<reference key="1">
    <citation type="journal article" date="2005" name="Nucleic Acids Res.">
        <title>Genome dynamics and diversity of Shigella species, the etiologic agents of bacillary dysentery.</title>
        <authorList>
            <person name="Yang F."/>
            <person name="Yang J."/>
            <person name="Zhang X."/>
            <person name="Chen L."/>
            <person name="Jiang Y."/>
            <person name="Yan Y."/>
            <person name="Tang X."/>
            <person name="Wang J."/>
            <person name="Xiong Z."/>
            <person name="Dong J."/>
            <person name="Xue Y."/>
            <person name="Zhu Y."/>
            <person name="Xu X."/>
            <person name="Sun L."/>
            <person name="Chen S."/>
            <person name="Nie H."/>
            <person name="Peng J."/>
            <person name="Xu J."/>
            <person name="Wang Y."/>
            <person name="Yuan Z."/>
            <person name="Wen Y."/>
            <person name="Yao Z."/>
            <person name="Shen Y."/>
            <person name="Qiang B."/>
            <person name="Hou Y."/>
            <person name="Yu J."/>
            <person name="Jin Q."/>
        </authorList>
    </citation>
    <scope>NUCLEOTIDE SEQUENCE [LARGE SCALE GENOMIC DNA]</scope>
    <source>
        <strain>Sd197</strain>
    </source>
</reference>
<proteinExistence type="inferred from homology"/>
<dbReference type="EMBL" id="CP000034">
    <property type="protein sequence ID" value="ABB61808.1"/>
    <property type="molecule type" value="Genomic_DNA"/>
</dbReference>
<dbReference type="RefSeq" id="WP_000460711.1">
    <property type="nucleotide sequence ID" value="NC_007606.1"/>
</dbReference>
<dbReference type="RefSeq" id="YP_403299.1">
    <property type="nucleotide sequence ID" value="NC_007606.1"/>
</dbReference>
<dbReference type="STRING" id="300267.SDY_1687"/>
<dbReference type="EnsemblBacteria" id="ABB61808">
    <property type="protein sequence ID" value="ABB61808"/>
    <property type="gene ID" value="SDY_1687"/>
</dbReference>
<dbReference type="KEGG" id="sdy:SDY_1687"/>
<dbReference type="PATRIC" id="fig|300267.13.peg.2034"/>
<dbReference type="HOGENOM" id="CLU_125889_0_0_6"/>
<dbReference type="Proteomes" id="UP000002716">
    <property type="component" value="Chromosome"/>
</dbReference>
<dbReference type="GO" id="GO:0005886">
    <property type="term" value="C:plasma membrane"/>
    <property type="evidence" value="ECO:0007669"/>
    <property type="project" value="UniProtKB-SubCell"/>
</dbReference>
<dbReference type="HAMAP" id="MF_01874">
    <property type="entry name" value="UPF0756"/>
    <property type="match status" value="1"/>
</dbReference>
<dbReference type="InterPro" id="IPR007382">
    <property type="entry name" value="UPF0756_TM"/>
</dbReference>
<dbReference type="PANTHER" id="PTHR38452">
    <property type="entry name" value="UPF0756 MEMBRANE PROTEIN YEAL"/>
    <property type="match status" value="1"/>
</dbReference>
<dbReference type="PANTHER" id="PTHR38452:SF1">
    <property type="entry name" value="UPF0756 MEMBRANE PROTEIN YEAL"/>
    <property type="match status" value="1"/>
</dbReference>
<dbReference type="Pfam" id="PF04284">
    <property type="entry name" value="DUF441"/>
    <property type="match status" value="1"/>
</dbReference>
<gene>
    <name evidence="1" type="primary">yeaL</name>
    <name type="ordered locus">SDY_1687</name>
</gene>
<comment type="subcellular location">
    <subcellularLocation>
        <location evidence="1">Cell membrane</location>
        <topology evidence="1">Multi-pass membrane protein</topology>
    </subcellularLocation>
</comment>
<comment type="similarity">
    <text evidence="1">Belongs to the UPF0756 family.</text>
</comment>
<organism>
    <name type="scientific">Shigella dysenteriae serotype 1 (strain Sd197)</name>
    <dbReference type="NCBI Taxonomy" id="300267"/>
    <lineage>
        <taxon>Bacteria</taxon>
        <taxon>Pseudomonadati</taxon>
        <taxon>Pseudomonadota</taxon>
        <taxon>Gammaproteobacteria</taxon>
        <taxon>Enterobacterales</taxon>
        <taxon>Enterobacteriaceae</taxon>
        <taxon>Shigella</taxon>
    </lineage>
</organism>
<feature type="chain" id="PRO_0000388937" description="UPF0756 membrane protein YeaL">
    <location>
        <begin position="1"/>
        <end position="148"/>
    </location>
</feature>
<feature type="transmembrane region" description="Helical" evidence="1">
    <location>
        <begin position="14"/>
        <end position="34"/>
    </location>
</feature>
<feature type="transmembrane region" description="Helical" evidence="1">
    <location>
        <begin position="51"/>
        <end position="71"/>
    </location>
</feature>
<feature type="transmembrane region" description="Helical" evidence="1">
    <location>
        <begin position="86"/>
        <end position="106"/>
    </location>
</feature>
<feature type="transmembrane region" description="Helical" evidence="1">
    <location>
        <begin position="121"/>
        <end position="141"/>
    </location>
</feature>
<protein>
    <recommendedName>
        <fullName evidence="1">UPF0756 membrane protein YeaL</fullName>
    </recommendedName>
</protein>
<name>YEAL_SHIDS</name>
<evidence type="ECO:0000255" key="1">
    <source>
        <dbReference type="HAMAP-Rule" id="MF_01874"/>
    </source>
</evidence>
<keyword id="KW-1003">Cell membrane</keyword>
<keyword id="KW-0472">Membrane</keyword>
<keyword id="KW-1185">Reference proteome</keyword>
<keyword id="KW-0812">Transmembrane</keyword>
<keyword id="KW-1133">Transmembrane helix</keyword>
<sequence length="148" mass="15348">MFDVTLLILLGLAALGFISHNTTVAVSILVLIIVRVTPLSTFFPWIEKQGLSIGIIILTIGVMAPIASGTLPPSTLIHSFLNWKSLVAIAVGVIVYWLGGRGVTLMGSQLQLVAGLLVGTVLGVALFRGVPVGPLIAAGLVSLIVGKQ</sequence>
<accession>Q32FU7</accession>